<organism>
    <name type="scientific">Laribacter hongkongensis (strain HLHK9)</name>
    <dbReference type="NCBI Taxonomy" id="557598"/>
    <lineage>
        <taxon>Bacteria</taxon>
        <taxon>Pseudomonadati</taxon>
        <taxon>Pseudomonadota</taxon>
        <taxon>Betaproteobacteria</taxon>
        <taxon>Neisseriales</taxon>
        <taxon>Aquaspirillaceae</taxon>
        <taxon>Laribacter</taxon>
    </lineage>
</organism>
<accession>C1DAT9</accession>
<reference key="1">
    <citation type="journal article" date="2009" name="PLoS Genet.">
        <title>The complete genome and proteome of Laribacter hongkongensis reveal potential mechanisms for adaptations to different temperatures and habitats.</title>
        <authorList>
            <person name="Woo P.C.Y."/>
            <person name="Lau S.K.P."/>
            <person name="Tse H."/>
            <person name="Teng J.L.L."/>
            <person name="Curreem S.O."/>
            <person name="Tsang A.K.L."/>
            <person name="Fan R.Y.Y."/>
            <person name="Wong G.K.M."/>
            <person name="Huang Y."/>
            <person name="Loman N.J."/>
            <person name="Snyder L.A.S."/>
            <person name="Cai J.J."/>
            <person name="Huang J.-D."/>
            <person name="Mak W."/>
            <person name="Pallen M.J."/>
            <person name="Lok S."/>
            <person name="Yuen K.-Y."/>
        </authorList>
    </citation>
    <scope>NUCLEOTIDE SEQUENCE [LARGE SCALE GENOMIC DNA]</scope>
    <source>
        <strain>HLHK9</strain>
    </source>
</reference>
<dbReference type="EMBL" id="CP001154">
    <property type="protein sequence ID" value="ACO73270.1"/>
    <property type="molecule type" value="Genomic_DNA"/>
</dbReference>
<dbReference type="SMR" id="C1DAT9"/>
<dbReference type="STRING" id="557598.LHK_00275"/>
<dbReference type="KEGG" id="lhk:LHK_00275"/>
<dbReference type="eggNOG" id="COG0257">
    <property type="taxonomic scope" value="Bacteria"/>
</dbReference>
<dbReference type="HOGENOM" id="CLU_135723_6_2_4"/>
<dbReference type="Proteomes" id="UP000002010">
    <property type="component" value="Chromosome"/>
</dbReference>
<dbReference type="GO" id="GO:0005737">
    <property type="term" value="C:cytoplasm"/>
    <property type="evidence" value="ECO:0007669"/>
    <property type="project" value="UniProtKB-ARBA"/>
</dbReference>
<dbReference type="GO" id="GO:1990904">
    <property type="term" value="C:ribonucleoprotein complex"/>
    <property type="evidence" value="ECO:0007669"/>
    <property type="project" value="UniProtKB-KW"/>
</dbReference>
<dbReference type="GO" id="GO:0005840">
    <property type="term" value="C:ribosome"/>
    <property type="evidence" value="ECO:0007669"/>
    <property type="project" value="UniProtKB-KW"/>
</dbReference>
<dbReference type="GO" id="GO:0003735">
    <property type="term" value="F:structural constituent of ribosome"/>
    <property type="evidence" value="ECO:0007669"/>
    <property type="project" value="InterPro"/>
</dbReference>
<dbReference type="GO" id="GO:0006412">
    <property type="term" value="P:translation"/>
    <property type="evidence" value="ECO:0007669"/>
    <property type="project" value="UniProtKB-UniRule"/>
</dbReference>
<dbReference type="HAMAP" id="MF_00251">
    <property type="entry name" value="Ribosomal_bL36"/>
    <property type="match status" value="1"/>
</dbReference>
<dbReference type="InterPro" id="IPR000473">
    <property type="entry name" value="Ribosomal_bL36"/>
</dbReference>
<dbReference type="InterPro" id="IPR035977">
    <property type="entry name" value="Ribosomal_bL36_sp"/>
</dbReference>
<dbReference type="NCBIfam" id="TIGR01022">
    <property type="entry name" value="rpmJ_bact"/>
    <property type="match status" value="1"/>
</dbReference>
<dbReference type="PANTHER" id="PTHR42888">
    <property type="entry name" value="50S RIBOSOMAL PROTEIN L36, CHLOROPLASTIC"/>
    <property type="match status" value="1"/>
</dbReference>
<dbReference type="PANTHER" id="PTHR42888:SF1">
    <property type="entry name" value="LARGE RIBOSOMAL SUBUNIT PROTEIN BL36C"/>
    <property type="match status" value="1"/>
</dbReference>
<dbReference type="Pfam" id="PF00444">
    <property type="entry name" value="Ribosomal_L36"/>
    <property type="match status" value="1"/>
</dbReference>
<dbReference type="SUPFAM" id="SSF57840">
    <property type="entry name" value="Ribosomal protein L36"/>
    <property type="match status" value="1"/>
</dbReference>
<dbReference type="PROSITE" id="PS00828">
    <property type="entry name" value="RIBOSOMAL_L36"/>
    <property type="match status" value="1"/>
</dbReference>
<comment type="similarity">
    <text evidence="1">Belongs to the bacterial ribosomal protein bL36 family.</text>
</comment>
<evidence type="ECO:0000255" key="1">
    <source>
        <dbReference type="HAMAP-Rule" id="MF_00251"/>
    </source>
</evidence>
<evidence type="ECO:0000305" key="2"/>
<sequence length="37" mass="4383">MRVQPSVKKICRNCKIIRRHGIVRVICTDPRHKQKQG</sequence>
<protein>
    <recommendedName>
        <fullName evidence="1">Large ribosomal subunit protein bL36</fullName>
    </recommendedName>
    <alternativeName>
        <fullName evidence="2">50S ribosomal protein L36</fullName>
    </alternativeName>
</protein>
<proteinExistence type="inferred from homology"/>
<gene>
    <name evidence="1" type="primary">rpmJ</name>
    <name type="ordered locus">LHK_00275</name>
</gene>
<feature type="chain" id="PRO_1000196192" description="Large ribosomal subunit protein bL36">
    <location>
        <begin position="1"/>
        <end position="37"/>
    </location>
</feature>
<name>RL36_LARHH</name>
<keyword id="KW-1185">Reference proteome</keyword>
<keyword id="KW-0687">Ribonucleoprotein</keyword>
<keyword id="KW-0689">Ribosomal protein</keyword>